<organism>
    <name type="scientific">Acinetobacter baumannii</name>
    <dbReference type="NCBI Taxonomy" id="470"/>
    <lineage>
        <taxon>Bacteria</taxon>
        <taxon>Pseudomonadati</taxon>
        <taxon>Pseudomonadota</taxon>
        <taxon>Gammaproteobacteria</taxon>
        <taxon>Moraxellales</taxon>
        <taxon>Moraxellaceae</taxon>
        <taxon>Acinetobacter</taxon>
        <taxon>Acinetobacter calcoaceticus/baumannii complex</taxon>
    </lineage>
</organism>
<sequence length="111" mass="12597">MVTANFAAIAGLSLIAVALVAVFFSPYRRWLGFMLAGMFFWGLLEVVRFGVQVTFEMPVTYSYLTALSLAMVMVTFVLLREDKQAQKALANRQYIEHTPVYEDDQQQCSSR</sequence>
<evidence type="ECO:0000255" key="1"/>
<evidence type="ECO:0000269" key="2">
    <source>
    </source>
</evidence>
<evidence type="ECO:0000303" key="3">
    <source>
    </source>
</evidence>
<evidence type="ECO:0000305" key="4"/>
<evidence type="ECO:0000305" key="5">
    <source>
    </source>
</evidence>
<evidence type="ECO:0000312" key="6">
    <source>
        <dbReference type="EMBL" id="AKA29893.1"/>
    </source>
</evidence>
<evidence type="ECO:0000312" key="7">
    <source>
        <dbReference type="Proteomes" id="UP000032746"/>
    </source>
</evidence>
<protein>
    <recommendedName>
        <fullName evidence="4">Ciprofloxacin tolerance protein</fullName>
    </recommendedName>
    <alternativeName>
        <fullName evidence="3">Acinetobacter ciprofloxacin tolerance</fullName>
        <shortName evidence="3">AciT</shortName>
    </alternativeName>
</protein>
<dbReference type="EMBL" id="CP008706">
    <property type="protein sequence ID" value="AKA29893.1"/>
    <property type="molecule type" value="Genomic_DNA"/>
</dbReference>
<dbReference type="RefSeq" id="WP_000255593.1">
    <property type="nucleotide sequence ID" value="NZ_WYAT01000006.1"/>
</dbReference>
<dbReference type="GeneID" id="92895627"/>
<dbReference type="Proteomes" id="UP000032746">
    <property type="component" value="Chromosome"/>
</dbReference>
<dbReference type="GO" id="GO:0005886">
    <property type="term" value="C:plasma membrane"/>
    <property type="evidence" value="ECO:0007669"/>
    <property type="project" value="UniProtKB-SubCell"/>
</dbReference>
<dbReference type="GO" id="GO:0046677">
    <property type="term" value="P:response to antibiotic"/>
    <property type="evidence" value="ECO:0007669"/>
    <property type="project" value="UniProtKB-KW"/>
</dbReference>
<dbReference type="InterPro" id="IPR053771">
    <property type="entry name" value="AciT"/>
</dbReference>
<dbReference type="NCBIfam" id="NF045538">
    <property type="entry name" value="AciT"/>
    <property type="match status" value="1"/>
</dbReference>
<proteinExistence type="evidence at protein level"/>
<reference evidence="6 7" key="1">
    <citation type="journal article" date="2015" name="J. Bacteriol.">
        <title>Resources for Genetic and Genomic Analysis of Emerging Pathogen Acinetobacter baumannii.</title>
        <authorList>
            <person name="Gallagher L.A."/>
            <person name="Ramage E."/>
            <person name="Weiss E.J."/>
            <person name="Radey M."/>
            <person name="Hayden H.S."/>
            <person name="Held K.G."/>
            <person name="Huse H.K."/>
            <person name="Zurawski D.V."/>
            <person name="Brittnacher M.J."/>
            <person name="Manoil C."/>
        </authorList>
    </citation>
    <scope>NUCLEOTIDE SEQUENCE [LARGE SCALE GENOMIC DNA]</scope>
    <source>
        <strain>AB5075-UW</strain>
    </source>
</reference>
<reference key="2">
    <citation type="journal article" date="2021" name="Antimicrob. Agents Chemother.">
        <title>Identification of a Novel Ciprofloxacin Tolerance Gene, aciT, Which Contributes to Filamentation in Acinetobacter baumannii.</title>
        <authorList>
            <person name="Naidu V."/>
            <person name="Shah B."/>
            <person name="Kamath K.S."/>
            <person name="Chien A."/>
            <person name="Nagy S."/>
            <person name="Pokhrel A."/>
            <person name="Molloy M."/>
            <person name="Hassan K.A."/>
            <person name="Paulsen I.T."/>
        </authorList>
    </citation>
    <scope>IDENTIFICATION BY MASS SPECTROMETRY</scope>
    <scope>FUNCTION</scope>
    <scope>PROBABLE SUBCELLULAR LOCATION</scope>
    <scope>INDUCTION BY CIPROFLOXACIN</scope>
    <scope>DISRUPTION PHENOTYPE</scope>
    <scope>PROBABLE TOPOLOGY</scope>
    <source>
        <strain>AB5075-UW</strain>
    </source>
</reference>
<comment type="function">
    <text evidence="2 5">May play a role in cellular filamentation, especially in response to ciprofloxacin (Probable) (PubMed:33820764). Increased expression confers tolerance to the antibiotic ciprofloxacin (PubMed:33820764).</text>
</comment>
<comment type="subcellular location">
    <subcellularLocation>
        <location evidence="5">Cell inner membrane</location>
        <topology evidence="1">Multi-pass membrane protein</topology>
    </subcellularLocation>
</comment>
<comment type="induction">
    <text evidence="2">Both transcription and translation of this gene are induced by treatment with ciprofloxacin (at protein level) (PubMed:33820764).</text>
</comment>
<comment type="disruption phenotype">
    <text evidence="2">Increased susceptibility to ciprofloxacin, cells no longer filament in response to ciprofloxacin (PubMed:33820764).</text>
</comment>
<feature type="chain" id="PRO_0000460784" description="Ciprofloxacin tolerance protein">
    <location>
        <begin position="1"/>
        <end position="111"/>
    </location>
</feature>
<feature type="topological domain" description="Periplasmic" evidence="4">
    <location>
        <begin position="1"/>
        <end position="5"/>
    </location>
</feature>
<feature type="transmembrane region" description="Helical" evidence="1">
    <location>
        <begin position="6"/>
        <end position="26"/>
    </location>
</feature>
<feature type="topological domain" description="Cytoplasmic" evidence="4">
    <location>
        <begin position="27"/>
        <end position="30"/>
    </location>
</feature>
<feature type="transmembrane region" description="Helical" evidence="1">
    <location>
        <begin position="31"/>
        <end position="51"/>
    </location>
</feature>
<feature type="topological domain" description="Periplasmic" evidence="4">
    <location>
        <begin position="52"/>
        <end position="58"/>
    </location>
</feature>
<feature type="transmembrane region" description="Helical" evidence="1">
    <location>
        <begin position="59"/>
        <end position="79"/>
    </location>
</feature>
<feature type="topological domain" description="Cytoplasmic" evidence="4">
    <location>
        <begin position="80"/>
        <end position="111"/>
    </location>
</feature>
<keyword id="KW-0046">Antibiotic resistance</keyword>
<keyword id="KW-0997">Cell inner membrane</keyword>
<keyword id="KW-1003">Cell membrane</keyword>
<keyword id="KW-0472">Membrane</keyword>
<keyword id="KW-0812">Transmembrane</keyword>
<keyword id="KW-1133">Transmembrane helix</keyword>
<name>ACIT_ACIBA</name>
<accession>P0DXB3</accession>
<gene>
    <name evidence="3" type="primary">aciT</name>
    <name evidence="6" type="ORF">ABUW_0098</name>
</gene>